<name>MENC_PECAS</name>
<dbReference type="EC" id="4.2.1.113" evidence="1"/>
<dbReference type="EMBL" id="BX950851">
    <property type="protein sequence ID" value="CAG74124.1"/>
    <property type="molecule type" value="Genomic_DNA"/>
</dbReference>
<dbReference type="RefSeq" id="WP_011092804.1">
    <property type="nucleotide sequence ID" value="NC_004547.2"/>
</dbReference>
<dbReference type="SMR" id="Q6D7W1"/>
<dbReference type="STRING" id="218491.ECA1214"/>
<dbReference type="GeneID" id="57208025"/>
<dbReference type="KEGG" id="eca:ECA1214"/>
<dbReference type="PATRIC" id="fig|218491.5.peg.1234"/>
<dbReference type="eggNOG" id="COG1441">
    <property type="taxonomic scope" value="Bacteria"/>
</dbReference>
<dbReference type="HOGENOM" id="CLU_030273_0_1_6"/>
<dbReference type="OrthoDB" id="3725747at2"/>
<dbReference type="UniPathway" id="UPA00079"/>
<dbReference type="UniPathway" id="UPA01057">
    <property type="reaction ID" value="UER00165"/>
</dbReference>
<dbReference type="Proteomes" id="UP000007966">
    <property type="component" value="Chromosome"/>
</dbReference>
<dbReference type="GO" id="GO:0000287">
    <property type="term" value="F:magnesium ion binding"/>
    <property type="evidence" value="ECO:0007669"/>
    <property type="project" value="UniProtKB-UniRule"/>
</dbReference>
<dbReference type="GO" id="GO:0043748">
    <property type="term" value="F:O-succinylbenzoate synthase activity"/>
    <property type="evidence" value="ECO:0007669"/>
    <property type="project" value="UniProtKB-EC"/>
</dbReference>
<dbReference type="GO" id="GO:0009234">
    <property type="term" value="P:menaquinone biosynthetic process"/>
    <property type="evidence" value="ECO:0007669"/>
    <property type="project" value="UniProtKB-UniRule"/>
</dbReference>
<dbReference type="CDD" id="cd03320">
    <property type="entry name" value="OSBS"/>
    <property type="match status" value="1"/>
</dbReference>
<dbReference type="FunFam" id="3.20.20.120:FF:000006">
    <property type="entry name" value="o-succinylbenzoate synthase"/>
    <property type="match status" value="1"/>
</dbReference>
<dbReference type="Gene3D" id="3.20.20.120">
    <property type="entry name" value="Enolase-like C-terminal domain"/>
    <property type="match status" value="1"/>
</dbReference>
<dbReference type="Gene3D" id="3.30.390.10">
    <property type="entry name" value="Enolase-like, N-terminal domain"/>
    <property type="match status" value="1"/>
</dbReference>
<dbReference type="HAMAP" id="MF_00470">
    <property type="entry name" value="MenC_1"/>
    <property type="match status" value="1"/>
</dbReference>
<dbReference type="InterPro" id="IPR036849">
    <property type="entry name" value="Enolase-like_C_sf"/>
</dbReference>
<dbReference type="InterPro" id="IPR029017">
    <property type="entry name" value="Enolase-like_N"/>
</dbReference>
<dbReference type="InterPro" id="IPR029065">
    <property type="entry name" value="Enolase_C-like"/>
</dbReference>
<dbReference type="InterPro" id="IPR013342">
    <property type="entry name" value="Mandelate_racemase_C"/>
</dbReference>
<dbReference type="InterPro" id="IPR010196">
    <property type="entry name" value="OSB_synthase_MenC1"/>
</dbReference>
<dbReference type="InterPro" id="IPR041338">
    <property type="entry name" value="OSBS_N"/>
</dbReference>
<dbReference type="NCBIfam" id="TIGR01927">
    <property type="entry name" value="menC_gam_Gplu"/>
    <property type="match status" value="1"/>
</dbReference>
<dbReference type="NCBIfam" id="NF003473">
    <property type="entry name" value="PRK05105.1"/>
    <property type="match status" value="1"/>
</dbReference>
<dbReference type="PANTHER" id="PTHR48073:SF2">
    <property type="entry name" value="O-SUCCINYLBENZOATE SYNTHASE"/>
    <property type="match status" value="1"/>
</dbReference>
<dbReference type="PANTHER" id="PTHR48073">
    <property type="entry name" value="O-SUCCINYLBENZOATE SYNTHASE-RELATED"/>
    <property type="match status" value="1"/>
</dbReference>
<dbReference type="Pfam" id="PF21508">
    <property type="entry name" value="MenC_N"/>
    <property type="match status" value="1"/>
</dbReference>
<dbReference type="Pfam" id="PF13378">
    <property type="entry name" value="MR_MLE_C"/>
    <property type="match status" value="1"/>
</dbReference>
<dbReference type="SFLD" id="SFLDG00180">
    <property type="entry name" value="muconate_cycloisomerase"/>
    <property type="match status" value="1"/>
</dbReference>
<dbReference type="SFLD" id="SFLDF00009">
    <property type="entry name" value="o-succinylbenzoate_synthase"/>
    <property type="match status" value="1"/>
</dbReference>
<dbReference type="SMART" id="SM00922">
    <property type="entry name" value="MR_MLE"/>
    <property type="match status" value="1"/>
</dbReference>
<dbReference type="SUPFAM" id="SSF51604">
    <property type="entry name" value="Enolase C-terminal domain-like"/>
    <property type="match status" value="1"/>
</dbReference>
<dbReference type="SUPFAM" id="SSF54826">
    <property type="entry name" value="Enolase N-terminal domain-like"/>
    <property type="match status" value="1"/>
</dbReference>
<protein>
    <recommendedName>
        <fullName evidence="1">o-succinylbenzoate synthase</fullName>
        <shortName evidence="1">OSB synthase</shortName>
        <shortName evidence="1">OSBS</shortName>
        <ecNumber evidence="1">4.2.1.113</ecNumber>
    </recommendedName>
    <alternativeName>
        <fullName evidence="1">4-(2'-carboxyphenyl)-4-oxybutyric acid synthase</fullName>
    </alternativeName>
    <alternativeName>
        <fullName evidence="1">o-succinylbenzoic acid synthase</fullName>
    </alternativeName>
</protein>
<keyword id="KW-0456">Lyase</keyword>
<keyword id="KW-0460">Magnesium</keyword>
<keyword id="KW-0474">Menaquinone biosynthesis</keyword>
<keyword id="KW-0479">Metal-binding</keyword>
<keyword id="KW-1185">Reference proteome</keyword>
<sequence>MRQVTLYRYSVPMEAGVVLRNQRLKTRDGLIVRLQEDERLGWGEIAPLPEFSLETLAEAESAALEQLAAWAAGHAFSEDLPPSVAFGLSCAQAELDQHLPQAADYRKAPLCNGDPDELFEMLQAMPGEKVAKVKVGLYEAVRDGMIVNVLLEALPDLKLRLDANRSWTRAKADGFARYVAPSLRSRIAFLEEPCKTREESREFARETGINIAWDESVREADFRVEAEPGVSAIVIKPTLVGSLARCQQLVQETHQAGLTAVISSSIESSLGLTQLARLASWLTPDTIPGLDTLDLMQTQVIQRWPDSALPLLAAEQLDVVWQS</sequence>
<reference key="1">
    <citation type="journal article" date="2004" name="Proc. Natl. Acad. Sci. U.S.A.">
        <title>Genome sequence of the enterobacterial phytopathogen Erwinia carotovora subsp. atroseptica and characterization of virulence factors.</title>
        <authorList>
            <person name="Bell K.S."/>
            <person name="Sebaihia M."/>
            <person name="Pritchard L."/>
            <person name="Holden M.T.G."/>
            <person name="Hyman L.J."/>
            <person name="Holeva M.C."/>
            <person name="Thomson N.R."/>
            <person name="Bentley S.D."/>
            <person name="Churcher L.J.C."/>
            <person name="Mungall K."/>
            <person name="Atkin R."/>
            <person name="Bason N."/>
            <person name="Brooks K."/>
            <person name="Chillingworth T."/>
            <person name="Clark K."/>
            <person name="Doggett J."/>
            <person name="Fraser A."/>
            <person name="Hance Z."/>
            <person name="Hauser H."/>
            <person name="Jagels K."/>
            <person name="Moule S."/>
            <person name="Norbertczak H."/>
            <person name="Ormond D."/>
            <person name="Price C."/>
            <person name="Quail M.A."/>
            <person name="Sanders M."/>
            <person name="Walker D."/>
            <person name="Whitehead S."/>
            <person name="Salmond G.P.C."/>
            <person name="Birch P.R.J."/>
            <person name="Parkhill J."/>
            <person name="Toth I.K."/>
        </authorList>
    </citation>
    <scope>NUCLEOTIDE SEQUENCE [LARGE SCALE GENOMIC DNA]</scope>
    <source>
        <strain>SCRI 1043 / ATCC BAA-672</strain>
    </source>
</reference>
<accession>Q6D7W1</accession>
<evidence type="ECO:0000255" key="1">
    <source>
        <dbReference type="HAMAP-Rule" id="MF_00470"/>
    </source>
</evidence>
<proteinExistence type="inferred from homology"/>
<organism>
    <name type="scientific">Pectobacterium atrosepticum (strain SCRI 1043 / ATCC BAA-672)</name>
    <name type="common">Erwinia carotovora subsp. atroseptica</name>
    <dbReference type="NCBI Taxonomy" id="218491"/>
    <lineage>
        <taxon>Bacteria</taxon>
        <taxon>Pseudomonadati</taxon>
        <taxon>Pseudomonadota</taxon>
        <taxon>Gammaproteobacteria</taxon>
        <taxon>Enterobacterales</taxon>
        <taxon>Pectobacteriaceae</taxon>
        <taxon>Pectobacterium</taxon>
    </lineage>
</organism>
<comment type="function">
    <text evidence="1">Converts 2-succinyl-6-hydroxy-2,4-cyclohexadiene-1-carboxylate (SHCHC) to 2-succinylbenzoate (OSB).</text>
</comment>
<comment type="catalytic activity">
    <reaction evidence="1">
        <text>(1R,6R)-6-hydroxy-2-succinyl-cyclohexa-2,4-diene-1-carboxylate = 2-succinylbenzoate + H2O</text>
        <dbReference type="Rhea" id="RHEA:10196"/>
        <dbReference type="ChEBI" id="CHEBI:15377"/>
        <dbReference type="ChEBI" id="CHEBI:18325"/>
        <dbReference type="ChEBI" id="CHEBI:58689"/>
        <dbReference type="EC" id="4.2.1.113"/>
    </reaction>
</comment>
<comment type="cofactor">
    <cofactor evidence="1">
        <name>a divalent metal cation</name>
        <dbReference type="ChEBI" id="CHEBI:60240"/>
    </cofactor>
</comment>
<comment type="pathway">
    <text evidence="1">Quinol/quinone metabolism; 1,4-dihydroxy-2-naphthoate biosynthesis; 1,4-dihydroxy-2-naphthoate from chorismate: step 4/7.</text>
</comment>
<comment type="pathway">
    <text evidence="1">Quinol/quinone metabolism; menaquinone biosynthesis.</text>
</comment>
<comment type="similarity">
    <text evidence="1">Belongs to the mandelate racemase/muconate lactonizing enzyme family. MenC type 1 subfamily.</text>
</comment>
<gene>
    <name evidence="1" type="primary">menC</name>
    <name type="ordered locus">ECA1214</name>
</gene>
<feature type="chain" id="PRO_1000013802" description="o-succinylbenzoate synthase">
    <location>
        <begin position="1"/>
        <end position="323"/>
    </location>
</feature>
<feature type="active site" description="Proton donor" evidence="1">
    <location>
        <position position="134"/>
    </location>
</feature>
<feature type="active site" description="Proton acceptor" evidence="1">
    <location>
        <position position="236"/>
    </location>
</feature>
<feature type="binding site" evidence="1">
    <location>
        <position position="162"/>
    </location>
    <ligand>
        <name>Mg(2+)</name>
        <dbReference type="ChEBI" id="CHEBI:18420"/>
    </ligand>
</feature>
<feature type="binding site" evidence="1">
    <location>
        <position position="191"/>
    </location>
    <ligand>
        <name>Mg(2+)</name>
        <dbReference type="ChEBI" id="CHEBI:18420"/>
    </ligand>
</feature>
<feature type="binding site" evidence="1">
    <location>
        <position position="214"/>
    </location>
    <ligand>
        <name>Mg(2+)</name>
        <dbReference type="ChEBI" id="CHEBI:18420"/>
    </ligand>
</feature>